<keyword id="KW-0012">Acyltransferase</keyword>
<keyword id="KW-0997">Cell inner membrane</keyword>
<keyword id="KW-1003">Cell membrane</keyword>
<keyword id="KW-0448">Lipopolysaccharide biosynthesis</keyword>
<keyword id="KW-0472">Membrane</keyword>
<keyword id="KW-1185">Reference proteome</keyword>
<keyword id="KW-0346">Stress response</keyword>
<keyword id="KW-0808">Transferase</keyword>
<keyword id="KW-0812">Transmembrane</keyword>
<keyword id="KW-1133">Transmembrane helix</keyword>
<proteinExistence type="evidence at protein level"/>
<accession>P0ACV2</accession>
<accession>P76522</accession>
<accession>P76949</accession>
<comment type="function">
    <text evidence="2 3">Catalyzes the transfer of palmitoleate from palmitoleoyl-[acyl-carrier-protein] (ACP) to Kdo(2)-lipid IV(A) to form Kdo(2)-(palmitoleoyl)-lipid IV(A). Required for the biosynthesis of a distinct molecular species of lipid A, which is present only in cells grown at low temperatures. It may confer a selective advantage to cells growing at lower temperatures by making the outer membrane a more effective barrier to harmful chemicals.</text>
</comment>
<comment type="catalytic activity">
    <reaction evidence="1 2">
        <text>(9Z)-hexadecenoyl-[ACP] + alpha-Kdo-(2-&gt;4)-alpha-Kdo-(2-&gt;6)-lipid IVA (E. coli) = (9Z)-hexadecenoyl-(Kdo)2-lipid IVA (E. coli) + holo-[ACP]</text>
        <dbReference type="Rhea" id="RHEA:44012"/>
        <dbReference type="Rhea" id="RHEA-COMP:9685"/>
        <dbReference type="Rhea" id="RHEA-COMP:10800"/>
        <dbReference type="ChEBI" id="CHEBI:60365"/>
        <dbReference type="ChEBI" id="CHEBI:61520"/>
        <dbReference type="ChEBI" id="CHEBI:64479"/>
        <dbReference type="ChEBI" id="CHEBI:83989"/>
        <dbReference type="EC" id="2.3.1.242"/>
    </reaction>
</comment>
<comment type="pathway">
    <text evidence="1 2">Bacterial outer membrane biogenesis; lipopolysaccharide biosynthesis.</text>
</comment>
<comment type="subcellular location">
    <subcellularLocation>
        <location evidence="1 7">Cell inner membrane</location>
        <topology evidence="1">Single-pass membrane protein</topology>
    </subcellularLocation>
</comment>
<comment type="induction">
    <text evidence="2 4">Induced more than 30-fold upon cold shock. The induced activity is maximal after 2 hours of cold shock, and then gradually declines but does not disappear (PubMed:10092655). Induced in persister cells (PubMed:16768798).</text>
</comment>
<comment type="disruption phenotype">
    <text evidence="3">Disruption does not confer any obvious growth phenotype in nutrient broth at low temperatures, but mutant shows a 10-fold increase in sensitivity to rifampicin and vancomycin at 12 degrees Celsius compared with wild type cells.</text>
</comment>
<comment type="miscellaneous">
    <text evidence="8">About two-thirds of the lipid A residues of cells grown at 12 degrees Celsius are acylated with palmitoleate rather than laurate.</text>
</comment>
<comment type="similarity">
    <text evidence="1 7">Belongs to the LpxL/LpxM/LpxP family. LpxP subfamily.</text>
</comment>
<gene>
    <name evidence="1 5" type="primary">lpxP</name>
    <name type="synonym">ddg</name>
    <name type="ordered locus">b2378</name>
    <name type="ordered locus">JW2375</name>
</gene>
<protein>
    <recommendedName>
        <fullName evidence="1 6">Lipid A biosynthesis palmitoleoyltransferase</fullName>
        <ecNumber evidence="1 2">2.3.1.242</ecNumber>
    </recommendedName>
    <alternativeName>
        <fullName evidence="1">Kdo(2)-lipid IV(A) palmitoleoyltransferase</fullName>
    </alternativeName>
</protein>
<sequence length="306" mass="35493">MFPQCKFSREFLHPRYWLTWFGLGVLWLWVQLPYPVLCFLGTRIGAMARPFLKRRESIARKNLELCFPQHSAEEREKMIAENFRSLGMALVETGMAWFWPDSRVRKWFDVEGLDNLKRAQMQNRGVMVVGVHFMSLELGGRVMGLCQPMMATYRPHNNQLMEWVQTRGRMRSNKAMIGRNNLRGIVGALKKGEAVWFAPDQDYGRKGSSFAPFFAVENVATTNGTYVLSRLSGAAMLTVTMVRKADYSGYRLFITPEMEGYPTDENQAAAYMNKIIEKEIMRAPEQYLWIHRRFKTRPVGESSLYI</sequence>
<organism>
    <name type="scientific">Escherichia coli (strain K12)</name>
    <dbReference type="NCBI Taxonomy" id="83333"/>
    <lineage>
        <taxon>Bacteria</taxon>
        <taxon>Pseudomonadati</taxon>
        <taxon>Pseudomonadota</taxon>
        <taxon>Gammaproteobacteria</taxon>
        <taxon>Enterobacterales</taxon>
        <taxon>Enterobacteriaceae</taxon>
        <taxon>Escherichia</taxon>
    </lineage>
</organism>
<feature type="chain" id="PRO_0000201781" description="Lipid A biosynthesis palmitoleoyltransferase">
    <location>
        <begin position="1"/>
        <end position="306"/>
    </location>
</feature>
<feature type="transmembrane region" description="Helical" evidence="1">
    <location>
        <begin position="20"/>
        <end position="40"/>
    </location>
</feature>
<feature type="short sequence motif" description="HXXXXD motif" evidence="1">
    <location>
        <begin position="132"/>
        <end position="137"/>
    </location>
</feature>
<dbReference type="EC" id="2.3.1.242" evidence="1 2"/>
<dbReference type="EMBL" id="U49787">
    <property type="protein sequence ID" value="AAB66658.1"/>
    <property type="molecule type" value="Genomic_DNA"/>
</dbReference>
<dbReference type="EMBL" id="U00096">
    <property type="protein sequence ID" value="AAC75437.2"/>
    <property type="molecule type" value="Genomic_DNA"/>
</dbReference>
<dbReference type="EMBL" id="AP009048">
    <property type="protein sequence ID" value="BAA16248.1"/>
    <property type="molecule type" value="Genomic_DNA"/>
</dbReference>
<dbReference type="RefSeq" id="NP_416879.4">
    <property type="nucleotide sequence ID" value="NC_000913.3"/>
</dbReference>
<dbReference type="RefSeq" id="WP_000484404.1">
    <property type="nucleotide sequence ID" value="NZ_STEB01000008.1"/>
</dbReference>
<dbReference type="SMR" id="P0ACV2"/>
<dbReference type="BioGRID" id="4260930">
    <property type="interactions" value="151"/>
</dbReference>
<dbReference type="FunCoup" id="P0ACV2">
    <property type="interactions" value="240"/>
</dbReference>
<dbReference type="IntAct" id="P0ACV2">
    <property type="interactions" value="6"/>
</dbReference>
<dbReference type="STRING" id="511145.b2378"/>
<dbReference type="PaxDb" id="511145-b2378"/>
<dbReference type="EnsemblBacteria" id="AAC75437">
    <property type="protein sequence ID" value="AAC75437"/>
    <property type="gene ID" value="b2378"/>
</dbReference>
<dbReference type="GeneID" id="75202553"/>
<dbReference type="GeneID" id="946847"/>
<dbReference type="KEGG" id="ecj:JW2375"/>
<dbReference type="KEGG" id="eco:b2378"/>
<dbReference type="KEGG" id="ecoc:C3026_13225"/>
<dbReference type="PATRIC" id="fig|1411691.4.peg.4351"/>
<dbReference type="EchoBASE" id="EB2738"/>
<dbReference type="eggNOG" id="COG1560">
    <property type="taxonomic scope" value="Bacteria"/>
</dbReference>
<dbReference type="HOGENOM" id="CLU_049421_1_0_6"/>
<dbReference type="InParanoid" id="P0ACV2"/>
<dbReference type="OMA" id="FWFHRRF"/>
<dbReference type="OrthoDB" id="9803456at2"/>
<dbReference type="PhylomeDB" id="P0ACV2"/>
<dbReference type="BioCyc" id="EcoCyc:PALMITOTRANS-MONOMER"/>
<dbReference type="BioCyc" id="MetaCyc:PALMITOTRANS-MONOMER"/>
<dbReference type="BRENDA" id="2.3.1.242">
    <property type="organism ID" value="2026"/>
</dbReference>
<dbReference type="UniPathway" id="UPA00030"/>
<dbReference type="PRO" id="PR:P0ACV2"/>
<dbReference type="Proteomes" id="UP000000625">
    <property type="component" value="Chromosome"/>
</dbReference>
<dbReference type="GO" id="GO:0016020">
    <property type="term" value="C:membrane"/>
    <property type="evidence" value="ECO:0000318"/>
    <property type="project" value="GO_Central"/>
</dbReference>
<dbReference type="GO" id="GO:0005886">
    <property type="term" value="C:plasma membrane"/>
    <property type="evidence" value="ECO:0007669"/>
    <property type="project" value="UniProtKB-SubCell"/>
</dbReference>
<dbReference type="GO" id="GO:0016746">
    <property type="term" value="F:acyltransferase activity"/>
    <property type="evidence" value="ECO:0000318"/>
    <property type="project" value="GO_Central"/>
</dbReference>
<dbReference type="GO" id="GO:0008951">
    <property type="term" value="F:palmitoleoyl [acyl-carrier-protein]-dependent acyltransferase activity"/>
    <property type="evidence" value="ECO:0000314"/>
    <property type="project" value="EcoCyc"/>
</dbReference>
<dbReference type="GO" id="GO:0036104">
    <property type="term" value="P:Kdo2-lipid A biosynthetic process"/>
    <property type="evidence" value="ECO:0000315"/>
    <property type="project" value="EcoCyc"/>
</dbReference>
<dbReference type="GO" id="GO:0009245">
    <property type="term" value="P:lipid A biosynthetic process"/>
    <property type="evidence" value="ECO:0000318"/>
    <property type="project" value="GO_Central"/>
</dbReference>
<dbReference type="GO" id="GO:0009103">
    <property type="term" value="P:lipopolysaccharide biosynthetic process"/>
    <property type="evidence" value="ECO:0007669"/>
    <property type="project" value="UniProtKB-UniRule"/>
</dbReference>
<dbReference type="GO" id="GO:0009409">
    <property type="term" value="P:response to cold"/>
    <property type="evidence" value="ECO:0000270"/>
    <property type="project" value="EcoCyc"/>
</dbReference>
<dbReference type="CDD" id="cd07984">
    <property type="entry name" value="LPLAT_LABLAT-like"/>
    <property type="match status" value="1"/>
</dbReference>
<dbReference type="HAMAP" id="MF_01942">
    <property type="entry name" value="Lipid_A_LpxL_LpxP"/>
    <property type="match status" value="1"/>
</dbReference>
<dbReference type="HAMAP" id="MF_01943">
    <property type="entry name" value="Lipid_A_LpxP"/>
    <property type="match status" value="1"/>
</dbReference>
<dbReference type="InterPro" id="IPR004960">
    <property type="entry name" value="LipA_acyltrans"/>
</dbReference>
<dbReference type="InterPro" id="IPR011920">
    <property type="entry name" value="Lipid_A_LpxL_LpxP"/>
</dbReference>
<dbReference type="InterPro" id="IPR030857">
    <property type="entry name" value="Lipid_A_LpxP"/>
</dbReference>
<dbReference type="NCBIfam" id="TIGR02207">
    <property type="entry name" value="lipid_A_htrB"/>
    <property type="match status" value="1"/>
</dbReference>
<dbReference type="NCBIfam" id="NF005340">
    <property type="entry name" value="PRK06860.1"/>
    <property type="match status" value="1"/>
</dbReference>
<dbReference type="NCBIfam" id="NF005952">
    <property type="entry name" value="PRK08025.1"/>
    <property type="match status" value="1"/>
</dbReference>
<dbReference type="PANTHER" id="PTHR30606">
    <property type="entry name" value="LIPID A BIOSYNTHESIS LAUROYL ACYLTRANSFERASE"/>
    <property type="match status" value="1"/>
</dbReference>
<dbReference type="PANTHER" id="PTHR30606:SF7">
    <property type="entry name" value="LIPID A BIOSYNTHESIS PALMITOLEOYLTRANSFERASE"/>
    <property type="match status" value="1"/>
</dbReference>
<dbReference type="Pfam" id="PF03279">
    <property type="entry name" value="Lip_A_acyltrans"/>
    <property type="match status" value="1"/>
</dbReference>
<dbReference type="PIRSF" id="PIRSF026649">
    <property type="entry name" value="MsbB"/>
    <property type="match status" value="1"/>
</dbReference>
<reference key="1">
    <citation type="submission" date="1997-03" db="EMBL/GenBank/DDBJ databases">
        <authorList>
            <person name="Sreekumar K.R."/>
            <person name="Schaechter M."/>
        </authorList>
    </citation>
    <scope>NUCLEOTIDE SEQUENCE [GENOMIC DNA]</scope>
    <source>
        <strain>K12 / W3110 / ATCC 27325 / DSM 5911</strain>
    </source>
</reference>
<reference key="2">
    <citation type="journal article" date="1997" name="DNA Res.">
        <title>Construction of a contiguous 874-kb sequence of the Escherichia coli-K12 genome corresponding to 50.0-68.8 min on the linkage map and analysis of its sequence features.</title>
        <authorList>
            <person name="Yamamoto Y."/>
            <person name="Aiba H."/>
            <person name="Baba T."/>
            <person name="Hayashi K."/>
            <person name="Inada T."/>
            <person name="Isono K."/>
            <person name="Itoh T."/>
            <person name="Kimura S."/>
            <person name="Kitagawa M."/>
            <person name="Makino K."/>
            <person name="Miki T."/>
            <person name="Mitsuhashi N."/>
            <person name="Mizobuchi K."/>
            <person name="Mori H."/>
            <person name="Nakade S."/>
            <person name="Nakamura Y."/>
            <person name="Nashimoto H."/>
            <person name="Oshima T."/>
            <person name="Oyama S."/>
            <person name="Saito N."/>
            <person name="Sampei G."/>
            <person name="Satoh Y."/>
            <person name="Sivasundaram S."/>
            <person name="Tagami H."/>
            <person name="Takahashi H."/>
            <person name="Takeda J."/>
            <person name="Takemoto K."/>
            <person name="Uehara K."/>
            <person name="Wada C."/>
            <person name="Yamagata S."/>
            <person name="Horiuchi T."/>
        </authorList>
    </citation>
    <scope>NUCLEOTIDE SEQUENCE [LARGE SCALE GENOMIC DNA]</scope>
    <source>
        <strain>K12 / W3110 / ATCC 27325 / DSM 5911</strain>
    </source>
</reference>
<reference key="3">
    <citation type="journal article" date="1997" name="Science">
        <title>The complete genome sequence of Escherichia coli K-12.</title>
        <authorList>
            <person name="Blattner F.R."/>
            <person name="Plunkett G. III"/>
            <person name="Bloch C.A."/>
            <person name="Perna N.T."/>
            <person name="Burland V."/>
            <person name="Riley M."/>
            <person name="Collado-Vides J."/>
            <person name="Glasner J.D."/>
            <person name="Rode C.K."/>
            <person name="Mayhew G.F."/>
            <person name="Gregor J."/>
            <person name="Davis N.W."/>
            <person name="Kirkpatrick H.A."/>
            <person name="Goeden M.A."/>
            <person name="Rose D.J."/>
            <person name="Mau B."/>
            <person name="Shao Y."/>
        </authorList>
    </citation>
    <scope>NUCLEOTIDE SEQUENCE [LARGE SCALE GENOMIC DNA]</scope>
    <source>
        <strain>K12 / MG1655 / ATCC 47076</strain>
    </source>
</reference>
<reference key="4">
    <citation type="journal article" date="2006" name="Mol. Syst. Biol.">
        <title>Highly accurate genome sequences of Escherichia coli K-12 strains MG1655 and W3110.</title>
        <authorList>
            <person name="Hayashi K."/>
            <person name="Morooka N."/>
            <person name="Yamamoto Y."/>
            <person name="Fujita K."/>
            <person name="Isono K."/>
            <person name="Choi S."/>
            <person name="Ohtsubo E."/>
            <person name="Baba T."/>
            <person name="Wanner B.L."/>
            <person name="Mori H."/>
            <person name="Horiuchi T."/>
        </authorList>
    </citation>
    <scope>NUCLEOTIDE SEQUENCE [LARGE SCALE GENOMIC DNA]</scope>
    <source>
        <strain>K12 / W3110 / ATCC 27325 / DSM 5911</strain>
    </source>
</reference>
<reference key="5">
    <citation type="journal article" date="1999" name="J. Biol. Chem.">
        <title>Effect of cold shock on lipid A biosynthesis in Escherichia coli. Induction at 12 degrees C of an acyltransferase specific for palmitoleoyl-acyl carrier protein.</title>
        <authorList>
            <person name="Carty S.M."/>
            <person name="Sreekumar K.R."/>
            <person name="Raetz C.R."/>
        </authorList>
    </citation>
    <scope>FUNCTION</scope>
    <scope>CATALYTIC ACTIVITY</scope>
    <scope>PATHWAY</scope>
    <scope>INDUCTION</scope>
    <source>
        <strain>K12 / W3110 / ATCC 27325 / DSM 5911</strain>
    </source>
</reference>
<reference key="6">
    <citation type="journal article" date="2002" name="J. Biol. Chem.">
        <title>An Escherichia coli mutant lacking the cold shock-induced palmitoleoyltransferase of lipid A biosynthesis: absence of unsaturated acyl chains and antibiotic hypersensitivity at 12 degrees C.</title>
        <authorList>
            <person name="Vorachek-Warren M.K."/>
            <person name="Carty S.M."/>
            <person name="Lin S."/>
            <person name="Cotter R.J."/>
            <person name="Raetz C.R."/>
        </authorList>
    </citation>
    <scope>FUNCTION</scope>
    <scope>DISRUPTION PHENOTYPE</scope>
</reference>
<reference key="7">
    <citation type="journal article" date="2006" name="BMC Microbiol.">
        <title>Persisters: a distinct physiological state of E. coli.</title>
        <authorList>
            <person name="Shah D."/>
            <person name="Zhang Z."/>
            <person name="Khodursky A."/>
            <person name="Kaldalu N."/>
            <person name="Kurg K."/>
            <person name="Lewis K."/>
        </authorList>
    </citation>
    <scope>INDUCTION IN PERSISTER CELLS</scope>
    <source>
        <strain>K12</strain>
    </source>
</reference>
<evidence type="ECO:0000255" key="1">
    <source>
        <dbReference type="HAMAP-Rule" id="MF_01943"/>
    </source>
</evidence>
<evidence type="ECO:0000269" key="2">
    <source>
    </source>
</evidence>
<evidence type="ECO:0000269" key="3">
    <source>
    </source>
</evidence>
<evidence type="ECO:0000269" key="4">
    <source>
    </source>
</evidence>
<evidence type="ECO:0000303" key="5">
    <source>
    </source>
</evidence>
<evidence type="ECO:0000303" key="6">
    <source>
    </source>
</evidence>
<evidence type="ECO:0000305" key="7"/>
<evidence type="ECO:0000305" key="8">
    <source>
    </source>
</evidence>
<name>LPXP_ECOLI</name>